<evidence type="ECO:0000255" key="1">
    <source>
        <dbReference type="HAMAP-Rule" id="MF_00360"/>
    </source>
</evidence>
<evidence type="ECO:0000305" key="2"/>
<name>RS6_COREF</name>
<comment type="function">
    <text evidence="1">Binds together with bS18 to 16S ribosomal RNA.</text>
</comment>
<comment type="similarity">
    <text evidence="1">Belongs to the bacterial ribosomal protein bS6 family.</text>
</comment>
<comment type="sequence caution" evidence="2">
    <conflict type="erroneous initiation">
        <sequence resource="EMBL-CDS" id="BAC19630"/>
    </conflict>
</comment>
<keyword id="KW-1185">Reference proteome</keyword>
<keyword id="KW-0687">Ribonucleoprotein</keyword>
<keyword id="KW-0689">Ribosomal protein</keyword>
<keyword id="KW-0694">RNA-binding</keyword>
<keyword id="KW-0699">rRNA-binding</keyword>
<sequence length="95" mass="10986">MRQYELMIILDPSQDERTVAPSLDKFLEVVRKDKGDVVKVDVWGKRRLAYPINKKEEGIYAVIDLKCESATVLELDRVLNLNDGVLRTKVLRLDK</sequence>
<proteinExistence type="inferred from homology"/>
<accession>Q8FLP8</accession>
<reference key="1">
    <citation type="journal article" date="2003" name="Genome Res.">
        <title>Comparative complete genome sequence analysis of the amino acid replacements responsible for the thermostability of Corynebacterium efficiens.</title>
        <authorList>
            <person name="Nishio Y."/>
            <person name="Nakamura Y."/>
            <person name="Kawarabayasi Y."/>
            <person name="Usuda Y."/>
            <person name="Kimura E."/>
            <person name="Sugimoto S."/>
            <person name="Matsui K."/>
            <person name="Yamagishi A."/>
            <person name="Kikuchi H."/>
            <person name="Ikeo K."/>
            <person name="Gojobori T."/>
        </authorList>
    </citation>
    <scope>NUCLEOTIDE SEQUENCE [LARGE SCALE GENOMIC DNA]</scope>
    <source>
        <strain>DSM 44549 / YS-314 / AJ 12310 / JCM 11189 / NBRC 100395</strain>
    </source>
</reference>
<organism>
    <name type="scientific">Corynebacterium efficiens (strain DSM 44549 / YS-314 / AJ 12310 / JCM 11189 / NBRC 100395)</name>
    <dbReference type="NCBI Taxonomy" id="196164"/>
    <lineage>
        <taxon>Bacteria</taxon>
        <taxon>Bacillati</taxon>
        <taxon>Actinomycetota</taxon>
        <taxon>Actinomycetes</taxon>
        <taxon>Mycobacteriales</taxon>
        <taxon>Corynebacteriaceae</taxon>
        <taxon>Corynebacterium</taxon>
    </lineage>
</organism>
<dbReference type="EMBL" id="BA000035">
    <property type="protein sequence ID" value="BAC19630.1"/>
    <property type="status" value="ALT_INIT"/>
    <property type="molecule type" value="Genomic_DNA"/>
</dbReference>
<dbReference type="RefSeq" id="WP_011076098.1">
    <property type="nucleotide sequence ID" value="NC_004369.1"/>
</dbReference>
<dbReference type="SMR" id="Q8FLP8"/>
<dbReference type="STRING" id="196164.gene:10743270"/>
<dbReference type="KEGG" id="cef:CE2820"/>
<dbReference type="eggNOG" id="COG0360">
    <property type="taxonomic scope" value="Bacteria"/>
</dbReference>
<dbReference type="HOGENOM" id="CLU_113441_5_3_11"/>
<dbReference type="OrthoDB" id="9812702at2"/>
<dbReference type="Proteomes" id="UP000001409">
    <property type="component" value="Chromosome"/>
</dbReference>
<dbReference type="GO" id="GO:0005737">
    <property type="term" value="C:cytoplasm"/>
    <property type="evidence" value="ECO:0007669"/>
    <property type="project" value="UniProtKB-ARBA"/>
</dbReference>
<dbReference type="GO" id="GO:1990904">
    <property type="term" value="C:ribonucleoprotein complex"/>
    <property type="evidence" value="ECO:0007669"/>
    <property type="project" value="UniProtKB-KW"/>
</dbReference>
<dbReference type="GO" id="GO:0005840">
    <property type="term" value="C:ribosome"/>
    <property type="evidence" value="ECO:0007669"/>
    <property type="project" value="UniProtKB-KW"/>
</dbReference>
<dbReference type="GO" id="GO:0070181">
    <property type="term" value="F:small ribosomal subunit rRNA binding"/>
    <property type="evidence" value="ECO:0007669"/>
    <property type="project" value="TreeGrafter"/>
</dbReference>
<dbReference type="GO" id="GO:0003735">
    <property type="term" value="F:structural constituent of ribosome"/>
    <property type="evidence" value="ECO:0007669"/>
    <property type="project" value="InterPro"/>
</dbReference>
<dbReference type="GO" id="GO:0006412">
    <property type="term" value="P:translation"/>
    <property type="evidence" value="ECO:0007669"/>
    <property type="project" value="UniProtKB-UniRule"/>
</dbReference>
<dbReference type="CDD" id="cd00473">
    <property type="entry name" value="bS6"/>
    <property type="match status" value="1"/>
</dbReference>
<dbReference type="FunFam" id="3.30.70.60:FF:000002">
    <property type="entry name" value="30S ribosomal protein S6"/>
    <property type="match status" value="1"/>
</dbReference>
<dbReference type="Gene3D" id="3.30.70.60">
    <property type="match status" value="1"/>
</dbReference>
<dbReference type="HAMAP" id="MF_00360">
    <property type="entry name" value="Ribosomal_bS6"/>
    <property type="match status" value="1"/>
</dbReference>
<dbReference type="InterPro" id="IPR000529">
    <property type="entry name" value="Ribosomal_bS6"/>
</dbReference>
<dbReference type="InterPro" id="IPR020815">
    <property type="entry name" value="Ribosomal_bS6_CS"/>
</dbReference>
<dbReference type="InterPro" id="IPR035980">
    <property type="entry name" value="Ribosomal_bS6_sf"/>
</dbReference>
<dbReference type="InterPro" id="IPR020814">
    <property type="entry name" value="Ribosomal_S6_plastid/chlpt"/>
</dbReference>
<dbReference type="InterPro" id="IPR014717">
    <property type="entry name" value="Transl_elong_EF1B/ribsomal_bS6"/>
</dbReference>
<dbReference type="NCBIfam" id="TIGR00166">
    <property type="entry name" value="S6"/>
    <property type="match status" value="1"/>
</dbReference>
<dbReference type="PANTHER" id="PTHR21011">
    <property type="entry name" value="MITOCHONDRIAL 28S RIBOSOMAL PROTEIN S6"/>
    <property type="match status" value="1"/>
</dbReference>
<dbReference type="PANTHER" id="PTHR21011:SF1">
    <property type="entry name" value="SMALL RIBOSOMAL SUBUNIT PROTEIN BS6M"/>
    <property type="match status" value="1"/>
</dbReference>
<dbReference type="Pfam" id="PF01250">
    <property type="entry name" value="Ribosomal_S6"/>
    <property type="match status" value="1"/>
</dbReference>
<dbReference type="SUPFAM" id="SSF54995">
    <property type="entry name" value="Ribosomal protein S6"/>
    <property type="match status" value="1"/>
</dbReference>
<dbReference type="PROSITE" id="PS01048">
    <property type="entry name" value="RIBOSOMAL_S6"/>
    <property type="match status" value="1"/>
</dbReference>
<gene>
    <name evidence="1" type="primary">rpsF</name>
    <name type="ordered locus">CE2820</name>
</gene>
<feature type="chain" id="PRO_0000176758" description="Small ribosomal subunit protein bS6">
    <location>
        <begin position="1"/>
        <end position="95"/>
    </location>
</feature>
<protein>
    <recommendedName>
        <fullName evidence="1">Small ribosomal subunit protein bS6</fullName>
    </recommendedName>
    <alternativeName>
        <fullName evidence="2">30S ribosomal protein S6</fullName>
    </alternativeName>
</protein>